<comment type="function">
    <text evidence="2 3">Acts as a negative regulator of innate and adaptive immunity by maintaining immune homeostasis. Plays a regulatory role in the Toll-like signaling pathway by determining the strength of LPS-induced signaling and gene expression (By similarity). Inhibits TCR-mediated T-cell activation and negatively regulate T-cell function to prevent hyperresponsiveness (By similarity). Also inhibits autolysosome formation via negatively modulating MTOR activation by interacting with RAC1 and promoting the disassociation of the RAC1-MTOR complex (By similarity). Plays an essential role in NK-cell biology by acting as a checkpoint and displaying an expression pattern correlating with NK-cell maturation process and by negatively regulating NK-cell maturation and antitumor immunity (By similarity). Mechanistically, suppresses IL-15-triggered mTOR activity in NK-cells (By similarity).</text>
</comment>
<comment type="subunit">
    <text evidence="2">May interact with CASP8; however, such result is unclear since could not reproduce the interaction with CASP8. Interacts with RAC1.</text>
</comment>
<comment type="subcellular location">
    <subcellularLocation>
        <location evidence="2">Cytoplasm</location>
    </subcellularLocation>
    <subcellularLocation>
        <location evidence="2">Nucleus</location>
    </subcellularLocation>
    <subcellularLocation>
        <location evidence="2">Lysosome</location>
    </subcellularLocation>
</comment>
<comment type="domain">
    <text evidence="1">The central region was initially thought to constitute a DED (death effector) domain. However, 3D-structure data reveal a previously uncharacterized fold that is different from the predicted fold of a DED (death effector) domain. It consists of a large, hydrophobic central cavity that is poised for cofactor binding (By similarity).</text>
</comment>
<comment type="PTM">
    <text evidence="2">Phosphorylated by TAK1/MAP3K7; this phosphorylation triggers association with BTRC and subsequent ubiquitination and degradation.</text>
</comment>
<comment type="PTM">
    <text evidence="2">Ubiquitinated in a BTRC-depdent manner; leading to degradation mediated through the proteasome pathway.</text>
</comment>
<comment type="similarity">
    <text evidence="4">Belongs to the TNFAIP8 family. TNFAIP8L2 subfamily.</text>
</comment>
<accession>A9X192</accession>
<keyword id="KW-0963">Cytoplasm</keyword>
<keyword id="KW-0391">Immunity</keyword>
<keyword id="KW-0399">Innate immunity</keyword>
<keyword id="KW-0458">Lysosome</keyword>
<keyword id="KW-0539">Nucleus</keyword>
<keyword id="KW-0597">Phosphoprotein</keyword>
<keyword id="KW-1185">Reference proteome</keyword>
<keyword id="KW-0832">Ubl conjugation</keyword>
<reference key="1">
    <citation type="submission" date="2007-12" db="EMBL/GenBank/DDBJ databases">
        <title>NISC comparative sequencing initiative.</title>
        <authorList>
            <person name="Antonellis A."/>
            <person name="Ayele K."/>
            <person name="Benjamin B."/>
            <person name="Blakesley R.W."/>
            <person name="Boakye A."/>
            <person name="Bouffard G.G."/>
            <person name="Brinkley C."/>
            <person name="Brooks S."/>
            <person name="Chu G."/>
            <person name="Coleman H."/>
            <person name="Engle J."/>
            <person name="Gestole M."/>
            <person name="Greene A."/>
            <person name="Guan X."/>
            <person name="Gupta J."/>
            <person name="Haghighi P."/>
            <person name="Han J."/>
            <person name="Hansen N."/>
            <person name="Ho S.-L."/>
            <person name="Hu P."/>
            <person name="Hunter G."/>
            <person name="Hurle B."/>
            <person name="Idol J.R."/>
            <person name="Kwong P."/>
            <person name="Laric P."/>
            <person name="Larson S."/>
            <person name="Lee-Lin S.-Q."/>
            <person name="Legaspi R."/>
            <person name="Madden M."/>
            <person name="Maduro Q.L."/>
            <person name="Maduro V.B."/>
            <person name="Margulies E.H."/>
            <person name="Masiello C."/>
            <person name="Maskeri B."/>
            <person name="McDowell J."/>
            <person name="Mojidi H.A."/>
            <person name="Mullikin J.C."/>
            <person name="Oestreicher J.S."/>
            <person name="Park M."/>
            <person name="Portnoy M.E."/>
            <person name="Prasad A."/>
            <person name="Puri O."/>
            <person name="Reddix-Dugue N."/>
            <person name="Schandler K."/>
            <person name="Schueler M.G."/>
            <person name="Sison C."/>
            <person name="Stantripop S."/>
            <person name="Stephen E."/>
            <person name="Taye A."/>
            <person name="Thomas J.W."/>
            <person name="Thomas P.J."/>
            <person name="Tsipouri V."/>
            <person name="Ung L."/>
            <person name="Vogt J.L."/>
            <person name="Wetherby K.D."/>
            <person name="Young A."/>
            <person name="Green E.D."/>
        </authorList>
    </citation>
    <scope>NUCLEOTIDE SEQUENCE [LARGE SCALE GENOMIC DNA]</scope>
</reference>
<sequence length="184" mass="20542">MESFSSKSLALQAEKKLLSKMAGRSVAHLFIDETSSEVLDELYRVSKEYTHSRPQAQRVIKDLIKVAVKVAVLHRNGSFGPSELALATRFRQKLRQGAMTALSFGEVDFTFEAAVLAGLLTECRDVLLELVEHHLTPKSHGRIRHVFDHFSDPGLLTALYGPDFTQHLGKICDGLRKLLDEGKL</sequence>
<organism>
    <name type="scientific">Papio anubis</name>
    <name type="common">Olive baboon</name>
    <dbReference type="NCBI Taxonomy" id="9555"/>
    <lineage>
        <taxon>Eukaryota</taxon>
        <taxon>Metazoa</taxon>
        <taxon>Chordata</taxon>
        <taxon>Craniata</taxon>
        <taxon>Vertebrata</taxon>
        <taxon>Euteleostomi</taxon>
        <taxon>Mammalia</taxon>
        <taxon>Eutheria</taxon>
        <taxon>Euarchontoglires</taxon>
        <taxon>Primates</taxon>
        <taxon>Haplorrhini</taxon>
        <taxon>Catarrhini</taxon>
        <taxon>Cercopithecidae</taxon>
        <taxon>Cercopithecinae</taxon>
        <taxon>Papio</taxon>
    </lineage>
</organism>
<feature type="chain" id="PRO_0000369394" description="Tumor necrosis factor alpha-induced protein 8-like protein 2">
    <location>
        <begin position="1"/>
        <end position="184"/>
    </location>
</feature>
<feature type="modified residue" description="Phosphoserine" evidence="2">
    <location>
        <position position="3"/>
    </location>
</feature>
<gene>
    <name type="primary">TNFAIP8L2</name>
</gene>
<name>TP8L2_PAPAN</name>
<protein>
    <recommendedName>
        <fullName>Tumor necrosis factor alpha-induced protein 8-like protein 2</fullName>
        <shortName>TIPE2</shortName>
        <shortName>TNF alpha-induced protein 8-like protein 2</shortName>
        <shortName>TNFAIP8-like protein 2</shortName>
    </recommendedName>
</protein>
<proteinExistence type="inferred from homology"/>
<evidence type="ECO:0000250" key="1"/>
<evidence type="ECO:0000250" key="2">
    <source>
        <dbReference type="UniProtKB" id="Q6P589"/>
    </source>
</evidence>
<evidence type="ECO:0000250" key="3">
    <source>
        <dbReference type="UniProtKB" id="Q9D8Y7"/>
    </source>
</evidence>
<evidence type="ECO:0000305" key="4"/>
<dbReference type="EMBL" id="DP000542">
    <property type="protein sequence ID" value="ABY40787.1"/>
    <property type="molecule type" value="Genomic_DNA"/>
</dbReference>
<dbReference type="RefSeq" id="NP_001162415.1">
    <property type="nucleotide sequence ID" value="NM_001168944.1"/>
</dbReference>
<dbReference type="RefSeq" id="XP_009178927.1">
    <property type="nucleotide sequence ID" value="XM_009180663.4"/>
</dbReference>
<dbReference type="RefSeq" id="XP_009178935.1">
    <property type="nucleotide sequence ID" value="XM_009180671.4"/>
</dbReference>
<dbReference type="RefSeq" id="XP_009178939.1">
    <property type="nucleotide sequence ID" value="XM_009180675.4"/>
</dbReference>
<dbReference type="RefSeq" id="XP_031522426.1">
    <property type="nucleotide sequence ID" value="XM_031666566.1"/>
</dbReference>
<dbReference type="SMR" id="A9X192"/>
<dbReference type="STRING" id="9555.ENSPANP00000007635"/>
<dbReference type="GeneID" id="100137410"/>
<dbReference type="KEGG" id="panu:100137410"/>
<dbReference type="CTD" id="79626"/>
<dbReference type="eggNOG" id="ENOG502QST4">
    <property type="taxonomic scope" value="Eukaryota"/>
</dbReference>
<dbReference type="HOGENOM" id="CLU_085918_1_0_1"/>
<dbReference type="Proteomes" id="UP000028761">
    <property type="component" value="Chromosome 1"/>
</dbReference>
<dbReference type="Bgee" id="ENSPANG00000019786">
    <property type="expression patterns" value="Expressed in spleen and 53 other cell types or tissues"/>
</dbReference>
<dbReference type="GO" id="GO:0005764">
    <property type="term" value="C:lysosome"/>
    <property type="evidence" value="ECO:0007669"/>
    <property type="project" value="UniProtKB-SubCell"/>
</dbReference>
<dbReference type="GO" id="GO:0005634">
    <property type="term" value="C:nucleus"/>
    <property type="evidence" value="ECO:0007669"/>
    <property type="project" value="UniProtKB-SubCell"/>
</dbReference>
<dbReference type="GO" id="GO:0045087">
    <property type="term" value="P:innate immune response"/>
    <property type="evidence" value="ECO:0007669"/>
    <property type="project" value="UniProtKB-KW"/>
</dbReference>
<dbReference type="GO" id="GO:0050728">
    <property type="term" value="P:negative regulation of inflammatory response"/>
    <property type="evidence" value="ECO:0007669"/>
    <property type="project" value="TreeGrafter"/>
</dbReference>
<dbReference type="GO" id="GO:0050868">
    <property type="term" value="P:negative regulation of T cell activation"/>
    <property type="evidence" value="ECO:0007669"/>
    <property type="project" value="TreeGrafter"/>
</dbReference>
<dbReference type="GO" id="GO:0042981">
    <property type="term" value="P:regulation of apoptotic process"/>
    <property type="evidence" value="ECO:0007669"/>
    <property type="project" value="InterPro"/>
</dbReference>
<dbReference type="FunFam" id="1.20.1440.160:FF:000001">
    <property type="entry name" value="Tumor necrosis factor alpha-induced protein 8-like 1"/>
    <property type="match status" value="1"/>
</dbReference>
<dbReference type="Gene3D" id="1.20.1440.160">
    <property type="entry name" value="Tumor necrosis factor alpha-induced protein 8-like"/>
    <property type="match status" value="1"/>
</dbReference>
<dbReference type="InterPro" id="IPR008477">
    <property type="entry name" value="TNFAIP8-like"/>
</dbReference>
<dbReference type="InterPro" id="IPR038355">
    <property type="entry name" value="TNFAIP8_sf"/>
</dbReference>
<dbReference type="PANTHER" id="PTHR12757:SF4">
    <property type="entry name" value="TUMOR NECROSIS FACTOR ALPHA-INDUCED PROTEIN 8-LIKE PROTEIN 2"/>
    <property type="match status" value="1"/>
</dbReference>
<dbReference type="PANTHER" id="PTHR12757">
    <property type="entry name" value="TUMOR NECROSIS FACTOR INDUCED PROTEIN"/>
    <property type="match status" value="1"/>
</dbReference>
<dbReference type="Pfam" id="PF05527">
    <property type="entry name" value="DUF758"/>
    <property type="match status" value="1"/>
</dbReference>